<dbReference type="EMBL" id="CP000855">
    <property type="protein sequence ID" value="ACJ15994.1"/>
    <property type="molecule type" value="Genomic_DNA"/>
</dbReference>
<dbReference type="RefSeq" id="WP_012571466.1">
    <property type="nucleotide sequence ID" value="NC_011529.1"/>
</dbReference>
<dbReference type="SMR" id="B6YU52"/>
<dbReference type="STRING" id="523850.TON_0507"/>
<dbReference type="GeneID" id="7016804"/>
<dbReference type="KEGG" id="ton:TON_0507"/>
<dbReference type="PATRIC" id="fig|523850.10.peg.508"/>
<dbReference type="eggNOG" id="arCOG01742">
    <property type="taxonomic scope" value="Archaea"/>
</dbReference>
<dbReference type="HOGENOM" id="CLU_035759_3_0_2"/>
<dbReference type="OrthoDB" id="1011at2157"/>
<dbReference type="Proteomes" id="UP000002727">
    <property type="component" value="Chromosome"/>
</dbReference>
<dbReference type="GO" id="GO:0005737">
    <property type="term" value="C:cytoplasm"/>
    <property type="evidence" value="ECO:0007669"/>
    <property type="project" value="UniProtKB-SubCell"/>
</dbReference>
<dbReference type="GO" id="GO:0016149">
    <property type="term" value="F:translation release factor activity, codon specific"/>
    <property type="evidence" value="ECO:0007669"/>
    <property type="project" value="UniProtKB-UniRule"/>
</dbReference>
<dbReference type="FunFam" id="3.30.1330.30:FF:000032">
    <property type="entry name" value="Eukaryotic peptide chain release factor subunit 1"/>
    <property type="match status" value="1"/>
</dbReference>
<dbReference type="FunFam" id="3.30.420.60:FF:000003">
    <property type="entry name" value="Peptide chain release factor subunit 1"/>
    <property type="match status" value="1"/>
</dbReference>
<dbReference type="FunFam" id="3.30.960.10:FF:000003">
    <property type="entry name" value="Peptide chain release factor subunit 1"/>
    <property type="match status" value="1"/>
</dbReference>
<dbReference type="Gene3D" id="3.30.1330.30">
    <property type="match status" value="1"/>
</dbReference>
<dbReference type="Gene3D" id="3.30.960.10">
    <property type="entry name" value="eRF1 domain 1"/>
    <property type="match status" value="1"/>
</dbReference>
<dbReference type="Gene3D" id="3.30.420.60">
    <property type="entry name" value="eRF1 domain 2"/>
    <property type="match status" value="1"/>
</dbReference>
<dbReference type="HAMAP" id="MF_00424">
    <property type="entry name" value="Rel_fact_arch_1"/>
    <property type="match status" value="1"/>
</dbReference>
<dbReference type="InterPro" id="IPR042226">
    <property type="entry name" value="eFR1_2_sf"/>
</dbReference>
<dbReference type="InterPro" id="IPR005140">
    <property type="entry name" value="eRF1_1_Pelota"/>
</dbReference>
<dbReference type="InterPro" id="IPR024049">
    <property type="entry name" value="eRF1_1_sf"/>
</dbReference>
<dbReference type="InterPro" id="IPR005141">
    <property type="entry name" value="eRF1_2"/>
</dbReference>
<dbReference type="InterPro" id="IPR005142">
    <property type="entry name" value="eRF1_3"/>
</dbReference>
<dbReference type="InterPro" id="IPR020918">
    <property type="entry name" value="Peptide_chain-rel_aRF1"/>
</dbReference>
<dbReference type="InterPro" id="IPR004403">
    <property type="entry name" value="Peptide_chain-rel_eRF1/aRF1"/>
</dbReference>
<dbReference type="InterPro" id="IPR029064">
    <property type="entry name" value="Ribosomal_eL30-like_sf"/>
</dbReference>
<dbReference type="NCBIfam" id="TIGR03676">
    <property type="entry name" value="aRF1_eRF1"/>
    <property type="match status" value="1"/>
</dbReference>
<dbReference type="PANTHER" id="PTHR10113">
    <property type="entry name" value="PEPTIDE CHAIN RELEASE FACTOR SUBUNIT 1"/>
    <property type="match status" value="1"/>
</dbReference>
<dbReference type="Pfam" id="PF03463">
    <property type="entry name" value="eRF1_1"/>
    <property type="match status" value="1"/>
</dbReference>
<dbReference type="Pfam" id="PF03464">
    <property type="entry name" value="eRF1_2"/>
    <property type="match status" value="1"/>
</dbReference>
<dbReference type="Pfam" id="PF03465">
    <property type="entry name" value="eRF1_3"/>
    <property type="match status" value="1"/>
</dbReference>
<dbReference type="SMART" id="SM01194">
    <property type="entry name" value="eRF1_1"/>
    <property type="match status" value="1"/>
</dbReference>
<dbReference type="SUPFAM" id="SSF55315">
    <property type="entry name" value="L30e-like"/>
    <property type="match status" value="1"/>
</dbReference>
<dbReference type="SUPFAM" id="SSF55481">
    <property type="entry name" value="N-terminal domain of eukaryotic peptide chain release factor subunit 1, ERF1"/>
    <property type="match status" value="1"/>
</dbReference>
<dbReference type="SUPFAM" id="SSF53137">
    <property type="entry name" value="Translational machinery components"/>
    <property type="match status" value="1"/>
</dbReference>
<proteinExistence type="inferred from homology"/>
<gene>
    <name evidence="1" type="primary">prf1</name>
    <name type="ordered locus">TON_0507</name>
</gene>
<name>RF1_THEON</name>
<keyword id="KW-0963">Cytoplasm</keyword>
<keyword id="KW-0648">Protein biosynthesis</keyword>
<accession>B6YU52</accession>
<feature type="chain" id="PRO_1000193545" description="Peptide chain release factor subunit 1">
    <location>
        <begin position="1"/>
        <end position="415"/>
    </location>
</feature>
<organism>
    <name type="scientific">Thermococcus onnurineus (strain NA1)</name>
    <dbReference type="NCBI Taxonomy" id="523850"/>
    <lineage>
        <taxon>Archaea</taxon>
        <taxon>Methanobacteriati</taxon>
        <taxon>Methanobacteriota</taxon>
        <taxon>Thermococci</taxon>
        <taxon>Thermococcales</taxon>
        <taxon>Thermococcaceae</taxon>
        <taxon>Thermococcus</taxon>
    </lineage>
</organism>
<sequence>MSHKSAEMYELKKKVEELKSYRGRATELVSLYIPAGYDINKVMQQLREEYGTAQNIKSKSTRKNVLGALERAMQHLKLYRKTPENGLALFVGNVSEQEGVSDIKLWAIVPPEPLKVRLYRCDQTFVTEPLEEMLRVKDAYGLITVEKNEATIGLLRGKRIEVIDDLTSNVPGKTRAGGQSARRYERIREQETHEFMKRIAEHAAKAFLPLLEKGELKGIIIGGPGPTKEEFVDGDYLHHELRKKVIGVVDISYHGEYGLRELVEKASDILSEHEAVKERKLIQDFFRHLVKDTGLITYGEREVRKALELGAVDTLLISEGYDKVRVKAKCNACGWEELKTMSEQEFHVYKKKLTHCPKCGSQNISFEKWDVAEELIKLAEESGAEVEIISLDTEEGQQFYKAFGGLGAFLRYKIQ</sequence>
<comment type="function">
    <text evidence="1">Directs the termination of nascent peptide synthesis (translation) in response to the termination codons UAA, UAG and UGA.</text>
</comment>
<comment type="subunit">
    <text evidence="1">Heterodimer of two subunits, one of which binds GTP.</text>
</comment>
<comment type="subcellular location">
    <subcellularLocation>
        <location evidence="1">Cytoplasm</location>
    </subcellularLocation>
</comment>
<comment type="similarity">
    <text evidence="1">Belongs to the eukaryotic release factor 1 family.</text>
</comment>
<protein>
    <recommendedName>
        <fullName evidence="1">Peptide chain release factor subunit 1</fullName>
    </recommendedName>
    <alternativeName>
        <fullName evidence="1">Translation termination factor aRF1</fullName>
    </alternativeName>
</protein>
<reference key="1">
    <citation type="journal article" date="2008" name="J. Bacteriol.">
        <title>The complete genome sequence of Thermococcus onnurineus NA1 reveals a mixed heterotrophic and carboxydotrophic metabolism.</title>
        <authorList>
            <person name="Lee H.S."/>
            <person name="Kang S.G."/>
            <person name="Bae S.S."/>
            <person name="Lim J.K."/>
            <person name="Cho Y."/>
            <person name="Kim Y.J."/>
            <person name="Jeon J.H."/>
            <person name="Cha S.-S."/>
            <person name="Kwon K.K."/>
            <person name="Kim H.-T."/>
            <person name="Park C.-J."/>
            <person name="Lee H.-W."/>
            <person name="Kim S.I."/>
            <person name="Chun J."/>
            <person name="Colwell R.R."/>
            <person name="Kim S.-J."/>
            <person name="Lee J.-H."/>
        </authorList>
    </citation>
    <scope>NUCLEOTIDE SEQUENCE [LARGE SCALE GENOMIC DNA]</scope>
    <source>
        <strain>NA1</strain>
    </source>
</reference>
<evidence type="ECO:0000255" key="1">
    <source>
        <dbReference type="HAMAP-Rule" id="MF_00424"/>
    </source>
</evidence>